<proteinExistence type="inferred from homology"/>
<organism>
    <name type="scientific">African swine fever virus (isolate Pig/Kenya/KEN-50/1950)</name>
    <name type="common">ASFV</name>
    <dbReference type="NCBI Taxonomy" id="561445"/>
    <lineage>
        <taxon>Viruses</taxon>
        <taxon>Varidnaviria</taxon>
        <taxon>Bamfordvirae</taxon>
        <taxon>Nucleocytoviricota</taxon>
        <taxon>Pokkesviricetes</taxon>
        <taxon>Asfuvirales</taxon>
        <taxon>Asfarviridae</taxon>
        <taxon>Asfivirus</taxon>
        <taxon>African swine fever virus</taxon>
    </lineage>
</organism>
<dbReference type="EC" id="2.7.1.21"/>
<dbReference type="EMBL" id="AY261360">
    <property type="status" value="NOT_ANNOTATED_CDS"/>
    <property type="molecule type" value="Genomic_DNA"/>
</dbReference>
<dbReference type="SMR" id="P0C8I3"/>
<dbReference type="Proteomes" id="UP000000861">
    <property type="component" value="Segment"/>
</dbReference>
<dbReference type="GO" id="GO:0005524">
    <property type="term" value="F:ATP binding"/>
    <property type="evidence" value="ECO:0007669"/>
    <property type="project" value="UniProtKB-KW"/>
</dbReference>
<dbReference type="GO" id="GO:0046872">
    <property type="term" value="F:metal ion binding"/>
    <property type="evidence" value="ECO:0007669"/>
    <property type="project" value="UniProtKB-KW"/>
</dbReference>
<dbReference type="GO" id="GO:0004797">
    <property type="term" value="F:thymidine kinase activity"/>
    <property type="evidence" value="ECO:0007669"/>
    <property type="project" value="UniProtKB-EC"/>
</dbReference>
<dbReference type="GO" id="GO:0071897">
    <property type="term" value="P:DNA biosynthetic process"/>
    <property type="evidence" value="ECO:0007669"/>
    <property type="project" value="UniProtKB-KW"/>
</dbReference>
<dbReference type="GO" id="GO:0046104">
    <property type="term" value="P:thymidine metabolic process"/>
    <property type="evidence" value="ECO:0007669"/>
    <property type="project" value="TreeGrafter"/>
</dbReference>
<dbReference type="Gene3D" id="3.30.60.20">
    <property type="match status" value="1"/>
</dbReference>
<dbReference type="Gene3D" id="3.40.50.300">
    <property type="entry name" value="P-loop containing nucleotide triphosphate hydrolases"/>
    <property type="match status" value="1"/>
</dbReference>
<dbReference type="InterPro" id="IPR027417">
    <property type="entry name" value="P-loop_NTPase"/>
</dbReference>
<dbReference type="InterPro" id="IPR001267">
    <property type="entry name" value="Thymidine_kinase"/>
</dbReference>
<dbReference type="InterPro" id="IPR020633">
    <property type="entry name" value="Thymidine_kinase_CS"/>
</dbReference>
<dbReference type="PANTHER" id="PTHR11441">
    <property type="entry name" value="THYMIDINE KINASE"/>
    <property type="match status" value="1"/>
</dbReference>
<dbReference type="PANTHER" id="PTHR11441:SF0">
    <property type="entry name" value="THYMIDINE KINASE, CYTOSOLIC"/>
    <property type="match status" value="1"/>
</dbReference>
<dbReference type="Pfam" id="PF00265">
    <property type="entry name" value="TK"/>
    <property type="match status" value="1"/>
</dbReference>
<dbReference type="PIRSF" id="PIRSF035805">
    <property type="entry name" value="TK_cell"/>
    <property type="match status" value="1"/>
</dbReference>
<dbReference type="SUPFAM" id="SSF52540">
    <property type="entry name" value="P-loop containing nucleoside triphosphate hydrolases"/>
    <property type="match status" value="1"/>
</dbReference>
<dbReference type="PROSITE" id="PS00603">
    <property type="entry name" value="TK_CELLULAR_TYPE"/>
    <property type="match status" value="1"/>
</dbReference>
<feature type="chain" id="PRO_0000355222" description="Thymidine kinase">
    <location>
        <begin position="1"/>
        <end position="185"/>
    </location>
</feature>
<feature type="active site" description="Proton acceptor" evidence="2">
    <location>
        <position position="92"/>
    </location>
</feature>
<feature type="binding site" evidence="1">
    <location>
        <begin position="17"/>
        <end position="24"/>
    </location>
    <ligand>
        <name>ATP</name>
        <dbReference type="ChEBI" id="CHEBI:30616"/>
    </ligand>
</feature>
<feature type="binding site" evidence="1">
    <location>
        <position position="121"/>
    </location>
    <ligand>
        <name>substrate</name>
    </ligand>
</feature>
<feature type="binding site" evidence="1">
    <location>
        <position position="146"/>
    </location>
    <ligand>
        <name>Zn(2+)</name>
        <dbReference type="ChEBI" id="CHEBI:29105"/>
    </ligand>
</feature>
<feature type="binding site" evidence="1">
    <location>
        <position position="149"/>
    </location>
    <ligand>
        <name>Zn(2+)</name>
        <dbReference type="ChEBI" id="CHEBI:29105"/>
    </ligand>
</feature>
<feature type="binding site" evidence="1">
    <location>
        <begin position="166"/>
        <end position="170"/>
    </location>
    <ligand>
        <name>substrate</name>
    </ligand>
</feature>
<feature type="binding site" evidence="1">
    <location>
        <position position="179"/>
    </location>
    <ligand>
        <name>Zn(2+)</name>
        <dbReference type="ChEBI" id="CHEBI:29105"/>
    </ligand>
</feature>
<feature type="binding site" evidence="1">
    <location>
        <position position="182"/>
    </location>
    <ligand>
        <name>Zn(2+)</name>
        <dbReference type="ChEBI" id="CHEBI:29105"/>
    </ligand>
</feature>
<comment type="function">
    <text evidence="1">Phosphorylates thymidine. ASFV replicates in the cytoplasm of infected cells and contains genes encoding a number of enzymes needed for DNA synthesis, including thymidine kinase. Important for growth in swine macrophages in vitro and is a virus virulence factor in swine (By similarity).</text>
</comment>
<comment type="catalytic activity">
    <reaction>
        <text>thymidine + ATP = dTMP + ADP + H(+)</text>
        <dbReference type="Rhea" id="RHEA:19129"/>
        <dbReference type="ChEBI" id="CHEBI:15378"/>
        <dbReference type="ChEBI" id="CHEBI:17748"/>
        <dbReference type="ChEBI" id="CHEBI:30616"/>
        <dbReference type="ChEBI" id="CHEBI:63528"/>
        <dbReference type="ChEBI" id="CHEBI:456216"/>
        <dbReference type="EC" id="2.7.1.21"/>
    </reaction>
</comment>
<comment type="similarity">
    <text evidence="3">Belongs to the thymidine kinase family.</text>
</comment>
<keyword id="KW-0067">ATP-binding</keyword>
<keyword id="KW-0237">DNA synthesis</keyword>
<keyword id="KW-0418">Kinase</keyword>
<keyword id="KW-0479">Metal-binding</keyword>
<keyword id="KW-0547">Nucleotide-binding</keyword>
<keyword id="KW-0808">Transferase</keyword>
<keyword id="KW-0843">Virulence</keyword>
<keyword id="KW-0862">Zinc</keyword>
<protein>
    <recommendedName>
        <fullName>Thymidine kinase</fullName>
        <shortName>TDK</shortName>
        <ecNumber>2.7.1.21</ecNumber>
    </recommendedName>
</protein>
<sequence length="185" mass="21069">MSLIRKLKPGTISLVLGPMFAGKTTFLIHCINMLERLEKKVVFIKSTKNTRDKTIQTHSGIQLRPNQCKIIESAQLSDVGSLTDTHAVVIDEAHFFDDLIRCRTWADEKKIIILAGLNASFEQKMFQPIVRIFPYCNWVKYIGRTCMKCNRHNACFNVRKNADKTLILAGGSELYITCCNNCLKK</sequence>
<name>KITH_ASFK5</name>
<reference key="1">
    <citation type="submission" date="2003-03" db="EMBL/GenBank/DDBJ databases">
        <title>African swine fever virus genomes.</title>
        <authorList>
            <person name="Kutish G.F."/>
            <person name="Rock D.L."/>
        </authorList>
    </citation>
    <scope>NUCLEOTIDE SEQUENCE [LARGE SCALE GENOMIC DNA]</scope>
</reference>
<accession>P0C8I3</accession>
<gene>
    <name type="ordered locus">Ken-062</name>
</gene>
<organismHost>
    <name type="scientific">Ornithodoros</name>
    <name type="common">relapsing fever ticks</name>
    <dbReference type="NCBI Taxonomy" id="6937"/>
</organismHost>
<organismHost>
    <name type="scientific">Phacochoerus aethiopicus</name>
    <name type="common">Warthog</name>
    <dbReference type="NCBI Taxonomy" id="85517"/>
</organismHost>
<organismHost>
    <name type="scientific">Phacochoerus africanus</name>
    <name type="common">Warthog</name>
    <dbReference type="NCBI Taxonomy" id="41426"/>
</organismHost>
<organismHost>
    <name type="scientific">Potamochoerus larvatus</name>
    <name type="common">Bushpig</name>
    <dbReference type="NCBI Taxonomy" id="273792"/>
</organismHost>
<organismHost>
    <name type="scientific">Sus scrofa</name>
    <name type="common">Pig</name>
    <dbReference type="NCBI Taxonomy" id="9823"/>
</organismHost>
<evidence type="ECO:0000250" key="1"/>
<evidence type="ECO:0000255" key="2"/>
<evidence type="ECO:0000305" key="3"/>